<keyword id="KW-0456">Lyase</keyword>
<keyword id="KW-0501">Molybdenum cofactor biosynthesis</keyword>
<sequence length="158" mass="17278">MNLTHINEEGRARMVDVSDKDETKREAVAIGSIYMKSETLRRIHEGTIKKGDVLAVAQVAGIMAAKNTSHMIPMCHPIMITGCDISFSLDFENSKIDIKAVVKTVGQTGVEMEALTAVTVAALTIYDMCKAIDRDMVISEIMLVKKSGGKSGLYEREV</sequence>
<evidence type="ECO:0000255" key="1">
    <source>
        <dbReference type="HAMAP-Rule" id="MF_01224"/>
    </source>
</evidence>
<feature type="chain" id="PRO_1000139304" description="Cyclic pyranopterin monophosphate synthase">
    <location>
        <begin position="1"/>
        <end position="158"/>
    </location>
</feature>
<feature type="active site" evidence="1">
    <location>
        <position position="127"/>
    </location>
</feature>
<feature type="binding site" evidence="1">
    <location>
        <begin position="74"/>
        <end position="76"/>
    </location>
    <ligand>
        <name>substrate</name>
    </ligand>
</feature>
<feature type="binding site" evidence="1">
    <location>
        <begin position="112"/>
        <end position="113"/>
    </location>
    <ligand>
        <name>substrate</name>
    </ligand>
</feature>
<dbReference type="EC" id="4.6.1.17" evidence="1"/>
<dbReference type="EMBL" id="CP000923">
    <property type="protein sequence ID" value="ABY92682.1"/>
    <property type="molecule type" value="Genomic_DNA"/>
</dbReference>
<dbReference type="RefSeq" id="WP_009052272.1">
    <property type="nucleotide sequence ID" value="NC_010320.1"/>
</dbReference>
<dbReference type="SMR" id="B0K0F7"/>
<dbReference type="KEGG" id="tex:Teth514_1393"/>
<dbReference type="HOGENOM" id="CLU_074693_1_1_9"/>
<dbReference type="UniPathway" id="UPA00344"/>
<dbReference type="Proteomes" id="UP000002155">
    <property type="component" value="Chromosome"/>
</dbReference>
<dbReference type="GO" id="GO:0061799">
    <property type="term" value="F:cyclic pyranopterin monophosphate synthase activity"/>
    <property type="evidence" value="ECO:0007669"/>
    <property type="project" value="UniProtKB-UniRule"/>
</dbReference>
<dbReference type="GO" id="GO:0006777">
    <property type="term" value="P:Mo-molybdopterin cofactor biosynthetic process"/>
    <property type="evidence" value="ECO:0007669"/>
    <property type="project" value="UniProtKB-UniRule"/>
</dbReference>
<dbReference type="CDD" id="cd01420">
    <property type="entry name" value="MoaC_PE"/>
    <property type="match status" value="1"/>
</dbReference>
<dbReference type="Gene3D" id="3.30.70.640">
    <property type="entry name" value="Molybdopterin cofactor biosynthesis C (MoaC) domain"/>
    <property type="match status" value="1"/>
</dbReference>
<dbReference type="HAMAP" id="MF_01224_B">
    <property type="entry name" value="MoaC_B"/>
    <property type="match status" value="1"/>
</dbReference>
<dbReference type="InterPro" id="IPR023045">
    <property type="entry name" value="MoaC"/>
</dbReference>
<dbReference type="InterPro" id="IPR047594">
    <property type="entry name" value="MoaC_bact/euk"/>
</dbReference>
<dbReference type="InterPro" id="IPR036522">
    <property type="entry name" value="MoaC_sf"/>
</dbReference>
<dbReference type="InterPro" id="IPR050105">
    <property type="entry name" value="MoCo_biosynth_MoaA/MoaC"/>
</dbReference>
<dbReference type="InterPro" id="IPR002820">
    <property type="entry name" value="Mopterin_CF_biosynth-C_dom"/>
</dbReference>
<dbReference type="NCBIfam" id="TIGR00581">
    <property type="entry name" value="moaC"/>
    <property type="match status" value="1"/>
</dbReference>
<dbReference type="NCBIfam" id="NF006870">
    <property type="entry name" value="PRK09364.1"/>
    <property type="match status" value="1"/>
</dbReference>
<dbReference type="PANTHER" id="PTHR22960:SF29">
    <property type="entry name" value="CYCLIC PYRANOPTERIN MONOPHOSPHATE SYNTHASE"/>
    <property type="match status" value="1"/>
</dbReference>
<dbReference type="PANTHER" id="PTHR22960">
    <property type="entry name" value="MOLYBDOPTERIN COFACTOR SYNTHESIS PROTEIN A"/>
    <property type="match status" value="1"/>
</dbReference>
<dbReference type="Pfam" id="PF01967">
    <property type="entry name" value="MoaC"/>
    <property type="match status" value="1"/>
</dbReference>
<dbReference type="SUPFAM" id="SSF55040">
    <property type="entry name" value="Molybdenum cofactor biosynthesis protein C, MoaC"/>
    <property type="match status" value="1"/>
</dbReference>
<protein>
    <recommendedName>
        <fullName evidence="1">Cyclic pyranopterin monophosphate synthase</fullName>
        <ecNumber evidence="1">4.6.1.17</ecNumber>
    </recommendedName>
    <alternativeName>
        <fullName evidence="1">Molybdenum cofactor biosynthesis protein C</fullName>
    </alternativeName>
</protein>
<organism>
    <name type="scientific">Thermoanaerobacter sp. (strain X514)</name>
    <dbReference type="NCBI Taxonomy" id="399726"/>
    <lineage>
        <taxon>Bacteria</taxon>
        <taxon>Bacillati</taxon>
        <taxon>Bacillota</taxon>
        <taxon>Clostridia</taxon>
        <taxon>Thermoanaerobacterales</taxon>
        <taxon>Thermoanaerobacteraceae</taxon>
        <taxon>Thermoanaerobacter</taxon>
    </lineage>
</organism>
<comment type="function">
    <text evidence="1">Catalyzes the conversion of (8S)-3',8-cyclo-7,8-dihydroguanosine 5'-triphosphate to cyclic pyranopterin monophosphate (cPMP).</text>
</comment>
<comment type="catalytic activity">
    <reaction evidence="1">
        <text>(8S)-3',8-cyclo-7,8-dihydroguanosine 5'-triphosphate = cyclic pyranopterin phosphate + diphosphate</text>
        <dbReference type="Rhea" id="RHEA:49580"/>
        <dbReference type="ChEBI" id="CHEBI:33019"/>
        <dbReference type="ChEBI" id="CHEBI:59648"/>
        <dbReference type="ChEBI" id="CHEBI:131766"/>
        <dbReference type="EC" id="4.6.1.17"/>
    </reaction>
</comment>
<comment type="pathway">
    <text evidence="1">Cofactor biosynthesis; molybdopterin biosynthesis.</text>
</comment>
<comment type="subunit">
    <text evidence="1">Homohexamer; trimer of dimers.</text>
</comment>
<comment type="similarity">
    <text evidence="1">Belongs to the MoaC family.</text>
</comment>
<reference key="1">
    <citation type="submission" date="2008-01" db="EMBL/GenBank/DDBJ databases">
        <title>Complete sequence of Thermoanaerobacter sp. X514.</title>
        <authorList>
            <consortium name="US DOE Joint Genome Institute"/>
            <person name="Copeland A."/>
            <person name="Lucas S."/>
            <person name="Lapidus A."/>
            <person name="Barry K."/>
            <person name="Glavina del Rio T."/>
            <person name="Dalin E."/>
            <person name="Tice H."/>
            <person name="Pitluck S."/>
            <person name="Bruce D."/>
            <person name="Goodwin L."/>
            <person name="Saunders E."/>
            <person name="Brettin T."/>
            <person name="Detter J.C."/>
            <person name="Han C."/>
            <person name="Schmutz J."/>
            <person name="Larimer F."/>
            <person name="Land M."/>
            <person name="Hauser L."/>
            <person name="Kyrpides N."/>
            <person name="Kim E."/>
            <person name="Hemme C."/>
            <person name="Fields M.W."/>
            <person name="He Z."/>
            <person name="Zhou J."/>
            <person name="Richardson P."/>
        </authorList>
    </citation>
    <scope>NUCLEOTIDE SEQUENCE [LARGE SCALE GENOMIC DNA]</scope>
    <source>
        <strain>X514</strain>
    </source>
</reference>
<proteinExistence type="inferred from homology"/>
<gene>
    <name evidence="1" type="primary">moaC</name>
    <name type="ordered locus">Teth514_1393</name>
</gene>
<accession>B0K0F7</accession>
<name>MOAC_THEPX</name>